<organism>
    <name type="scientific">Methanothermobacter thermautotrophicus (strain ATCC 29096 / DSM 1053 / JCM 10044 / NBRC 100330 / Delta H)</name>
    <name type="common">Methanobacterium thermoautotrophicum</name>
    <dbReference type="NCBI Taxonomy" id="187420"/>
    <lineage>
        <taxon>Archaea</taxon>
        <taxon>Methanobacteriati</taxon>
        <taxon>Methanobacteriota</taxon>
        <taxon>Methanomada group</taxon>
        <taxon>Methanobacteria</taxon>
        <taxon>Methanobacteriales</taxon>
        <taxon>Methanobacteriaceae</taxon>
        <taxon>Methanothermobacter</taxon>
    </lineage>
</organism>
<dbReference type="EC" id="2.1.3.2" evidence="1"/>
<dbReference type="EMBL" id="AE000666">
    <property type="protein sequence ID" value="AAB85890.1"/>
    <property type="molecule type" value="Genomic_DNA"/>
</dbReference>
<dbReference type="PIR" id="C69055">
    <property type="entry name" value="C69055"/>
</dbReference>
<dbReference type="RefSeq" id="WP_010877025.1">
    <property type="nucleotide sequence ID" value="NC_000916.1"/>
</dbReference>
<dbReference type="SMR" id="O27464"/>
<dbReference type="FunCoup" id="O27464">
    <property type="interactions" value="216"/>
</dbReference>
<dbReference type="STRING" id="187420.MTH_1413"/>
<dbReference type="PaxDb" id="187420-MTH_1413"/>
<dbReference type="EnsemblBacteria" id="AAB85890">
    <property type="protein sequence ID" value="AAB85890"/>
    <property type="gene ID" value="MTH_1413"/>
</dbReference>
<dbReference type="GeneID" id="1471130"/>
<dbReference type="GeneID" id="77401934"/>
<dbReference type="KEGG" id="mth:MTH_1413"/>
<dbReference type="PATRIC" id="fig|187420.15.peg.1377"/>
<dbReference type="HOGENOM" id="CLU_043846_1_2_2"/>
<dbReference type="InParanoid" id="O27464"/>
<dbReference type="UniPathway" id="UPA00070">
    <property type="reaction ID" value="UER00116"/>
</dbReference>
<dbReference type="Proteomes" id="UP000005223">
    <property type="component" value="Chromosome"/>
</dbReference>
<dbReference type="GO" id="GO:0005829">
    <property type="term" value="C:cytosol"/>
    <property type="evidence" value="ECO:0007669"/>
    <property type="project" value="TreeGrafter"/>
</dbReference>
<dbReference type="GO" id="GO:0016597">
    <property type="term" value="F:amino acid binding"/>
    <property type="evidence" value="ECO:0007669"/>
    <property type="project" value="InterPro"/>
</dbReference>
<dbReference type="GO" id="GO:0004070">
    <property type="term" value="F:aspartate carbamoyltransferase activity"/>
    <property type="evidence" value="ECO:0007669"/>
    <property type="project" value="UniProtKB-UniRule"/>
</dbReference>
<dbReference type="GO" id="GO:0006207">
    <property type="term" value="P:'de novo' pyrimidine nucleobase biosynthetic process"/>
    <property type="evidence" value="ECO:0007669"/>
    <property type="project" value="InterPro"/>
</dbReference>
<dbReference type="GO" id="GO:0044205">
    <property type="term" value="P:'de novo' UMP biosynthetic process"/>
    <property type="evidence" value="ECO:0007669"/>
    <property type="project" value="UniProtKB-UniRule"/>
</dbReference>
<dbReference type="GO" id="GO:0006520">
    <property type="term" value="P:amino acid metabolic process"/>
    <property type="evidence" value="ECO:0007669"/>
    <property type="project" value="InterPro"/>
</dbReference>
<dbReference type="FunFam" id="3.40.50.1370:FF:000001">
    <property type="entry name" value="Aspartate carbamoyltransferase"/>
    <property type="match status" value="1"/>
</dbReference>
<dbReference type="FunFam" id="3.40.50.1370:FF:000002">
    <property type="entry name" value="Aspartate carbamoyltransferase 2"/>
    <property type="match status" value="1"/>
</dbReference>
<dbReference type="Gene3D" id="3.40.50.1370">
    <property type="entry name" value="Aspartate/ornithine carbamoyltransferase"/>
    <property type="match status" value="2"/>
</dbReference>
<dbReference type="HAMAP" id="MF_00001">
    <property type="entry name" value="Asp_carb_tr"/>
    <property type="match status" value="1"/>
</dbReference>
<dbReference type="InterPro" id="IPR006132">
    <property type="entry name" value="Asp/Orn_carbamoyltranf_P-bd"/>
</dbReference>
<dbReference type="InterPro" id="IPR006130">
    <property type="entry name" value="Asp/Orn_carbamoylTrfase"/>
</dbReference>
<dbReference type="InterPro" id="IPR036901">
    <property type="entry name" value="Asp/Orn_carbamoylTrfase_sf"/>
</dbReference>
<dbReference type="InterPro" id="IPR002082">
    <property type="entry name" value="Asp_carbamoyltransf"/>
</dbReference>
<dbReference type="InterPro" id="IPR006131">
    <property type="entry name" value="Asp_carbamoyltransf_Asp/Orn-bd"/>
</dbReference>
<dbReference type="NCBIfam" id="TIGR00670">
    <property type="entry name" value="asp_carb_tr"/>
    <property type="match status" value="1"/>
</dbReference>
<dbReference type="NCBIfam" id="NF002032">
    <property type="entry name" value="PRK00856.1"/>
    <property type="match status" value="1"/>
</dbReference>
<dbReference type="PANTHER" id="PTHR45753:SF6">
    <property type="entry name" value="ASPARTATE CARBAMOYLTRANSFERASE"/>
    <property type="match status" value="1"/>
</dbReference>
<dbReference type="PANTHER" id="PTHR45753">
    <property type="entry name" value="ORNITHINE CARBAMOYLTRANSFERASE, MITOCHONDRIAL"/>
    <property type="match status" value="1"/>
</dbReference>
<dbReference type="Pfam" id="PF00185">
    <property type="entry name" value="OTCace"/>
    <property type="match status" value="1"/>
</dbReference>
<dbReference type="Pfam" id="PF02729">
    <property type="entry name" value="OTCace_N"/>
    <property type="match status" value="1"/>
</dbReference>
<dbReference type="PRINTS" id="PR00100">
    <property type="entry name" value="AOTCASE"/>
</dbReference>
<dbReference type="PRINTS" id="PR00101">
    <property type="entry name" value="ATCASE"/>
</dbReference>
<dbReference type="SUPFAM" id="SSF53671">
    <property type="entry name" value="Aspartate/ornithine carbamoyltransferase"/>
    <property type="match status" value="1"/>
</dbReference>
<dbReference type="PROSITE" id="PS00097">
    <property type="entry name" value="CARBAMOYLTRANSFERASE"/>
    <property type="match status" value="1"/>
</dbReference>
<evidence type="ECO:0000255" key="1">
    <source>
        <dbReference type="HAMAP-Rule" id="MF_00001"/>
    </source>
</evidence>
<evidence type="ECO:0000305" key="2"/>
<name>PYRB_METTH</name>
<reference key="1">
    <citation type="journal article" date="1997" name="J. Bacteriol.">
        <title>Complete genome sequence of Methanobacterium thermoautotrophicum deltaH: functional analysis and comparative genomics.</title>
        <authorList>
            <person name="Smith D.R."/>
            <person name="Doucette-Stamm L.A."/>
            <person name="Deloughery C."/>
            <person name="Lee H.-M."/>
            <person name="Dubois J."/>
            <person name="Aldredge T."/>
            <person name="Bashirzadeh R."/>
            <person name="Blakely D."/>
            <person name="Cook R."/>
            <person name="Gilbert K."/>
            <person name="Harrison D."/>
            <person name="Hoang L."/>
            <person name="Keagle P."/>
            <person name="Lumm W."/>
            <person name="Pothier B."/>
            <person name="Qiu D."/>
            <person name="Spadafora R."/>
            <person name="Vicare R."/>
            <person name="Wang Y."/>
            <person name="Wierzbowski J."/>
            <person name="Gibson R."/>
            <person name="Jiwani N."/>
            <person name="Caruso A."/>
            <person name="Bush D."/>
            <person name="Safer H."/>
            <person name="Patwell D."/>
            <person name="Prabhakar S."/>
            <person name="McDougall S."/>
            <person name="Shimer G."/>
            <person name="Goyal A."/>
            <person name="Pietrovski S."/>
            <person name="Church G.M."/>
            <person name="Daniels C.J."/>
            <person name="Mao J.-I."/>
            <person name="Rice P."/>
            <person name="Noelling J."/>
            <person name="Reeve J.N."/>
        </authorList>
    </citation>
    <scope>NUCLEOTIDE SEQUENCE [LARGE SCALE GENOMIC DNA]</scope>
    <source>
        <strain>ATCC 29096 / DSM 1053 / JCM 10044 / NBRC 100330 / Delta H</strain>
    </source>
</reference>
<feature type="chain" id="PRO_0000113251" description="Aspartate carbamoyltransferase catalytic subunit">
    <location>
        <begin position="1"/>
        <end position="312"/>
    </location>
</feature>
<feature type="binding site" evidence="1">
    <location>
        <position position="54"/>
    </location>
    <ligand>
        <name>carbamoyl phosphate</name>
        <dbReference type="ChEBI" id="CHEBI:58228"/>
    </ligand>
</feature>
<feature type="binding site" evidence="1">
    <location>
        <position position="55"/>
    </location>
    <ligand>
        <name>carbamoyl phosphate</name>
        <dbReference type="ChEBI" id="CHEBI:58228"/>
    </ligand>
</feature>
<feature type="binding site" evidence="1">
    <location>
        <position position="83"/>
    </location>
    <ligand>
        <name>L-aspartate</name>
        <dbReference type="ChEBI" id="CHEBI:29991"/>
    </ligand>
</feature>
<feature type="binding site" evidence="1">
    <location>
        <position position="104"/>
    </location>
    <ligand>
        <name>carbamoyl phosphate</name>
        <dbReference type="ChEBI" id="CHEBI:58228"/>
    </ligand>
</feature>
<feature type="binding site" evidence="1">
    <location>
        <position position="132"/>
    </location>
    <ligand>
        <name>carbamoyl phosphate</name>
        <dbReference type="ChEBI" id="CHEBI:58228"/>
    </ligand>
</feature>
<feature type="binding site" evidence="1">
    <location>
        <position position="135"/>
    </location>
    <ligand>
        <name>carbamoyl phosphate</name>
        <dbReference type="ChEBI" id="CHEBI:58228"/>
    </ligand>
</feature>
<feature type="binding site" evidence="1">
    <location>
        <position position="165"/>
    </location>
    <ligand>
        <name>L-aspartate</name>
        <dbReference type="ChEBI" id="CHEBI:29991"/>
    </ligand>
</feature>
<feature type="binding site" evidence="1">
    <location>
        <position position="226"/>
    </location>
    <ligand>
        <name>L-aspartate</name>
        <dbReference type="ChEBI" id="CHEBI:29991"/>
    </ligand>
</feature>
<feature type="binding site" evidence="1">
    <location>
        <position position="263"/>
    </location>
    <ligand>
        <name>carbamoyl phosphate</name>
        <dbReference type="ChEBI" id="CHEBI:58228"/>
    </ligand>
</feature>
<feature type="binding site" evidence="1">
    <location>
        <position position="264"/>
    </location>
    <ligand>
        <name>carbamoyl phosphate</name>
        <dbReference type="ChEBI" id="CHEBI:58228"/>
    </ligand>
</feature>
<protein>
    <recommendedName>
        <fullName evidence="1">Aspartate carbamoyltransferase catalytic subunit</fullName>
        <ecNumber evidence="1">2.1.3.2</ecNumber>
    </recommendedName>
    <alternativeName>
        <fullName evidence="1">Aspartate transcarbamylase</fullName>
        <shortName evidence="1">ATCase</shortName>
    </alternativeName>
</protein>
<comment type="function">
    <text evidence="1">Catalyzes the condensation of carbamoyl phosphate and aspartate to form carbamoyl aspartate and inorganic phosphate, the committed step in the de novo pyrimidine nucleotide biosynthesis pathway.</text>
</comment>
<comment type="catalytic activity">
    <reaction evidence="1">
        <text>carbamoyl phosphate + L-aspartate = N-carbamoyl-L-aspartate + phosphate + H(+)</text>
        <dbReference type="Rhea" id="RHEA:20013"/>
        <dbReference type="ChEBI" id="CHEBI:15378"/>
        <dbReference type="ChEBI" id="CHEBI:29991"/>
        <dbReference type="ChEBI" id="CHEBI:32814"/>
        <dbReference type="ChEBI" id="CHEBI:43474"/>
        <dbReference type="ChEBI" id="CHEBI:58228"/>
        <dbReference type="EC" id="2.1.3.2"/>
    </reaction>
</comment>
<comment type="pathway">
    <text evidence="1">Pyrimidine metabolism; UMP biosynthesis via de novo pathway; (S)-dihydroorotate from bicarbonate: step 2/3.</text>
</comment>
<comment type="subunit">
    <text evidence="1">Heterooligomer of catalytic and regulatory chains.</text>
</comment>
<comment type="similarity">
    <text evidence="1 2">Belongs to the aspartate/ornithine carbamoyltransferase superfamily. ATCase family.</text>
</comment>
<accession>O27464</accession>
<proteinExistence type="inferred from homology"/>
<keyword id="KW-0665">Pyrimidine biosynthesis</keyword>
<keyword id="KW-1185">Reference proteome</keyword>
<keyword id="KW-0808">Transferase</keyword>
<gene>
    <name evidence="1" type="primary">pyrB</name>
    <name type="ordered locus">MTH_1413</name>
</gene>
<sequence length="312" mass="34872">MFENVISIKDFKREDIEFILREAEKMEPFASGEKSSSALRGKILGMMFYEPSTRTRLSFETAMKRLGGDVVGFADTGATSAVKGESLADTAMMLSAYSDAIVIRHNLEGAARYISDVVDVPVINAGDGAGQHPTQTLLDLYTMKRFFGRIGSLRVALVGDLKYGRTVHSLAYALAVFGASMSFVSPPVLRMPDNIIHDLRRAGVEVKETERLDDVIDEVDVLYVTRIQKERFPDPEEYSRIRGAYHIDGSTVADRDLIVMHPLPRIDEISPEVDSLPQAMYFRQAFYGVPVRMALLRLLISERRGSENQKIV</sequence>